<reference key="1">
    <citation type="journal article" date="1991" name="Nature">
        <title>Cloning of a cDNA for a glutamate receptor subunit activated by kainate but not AMPA.</title>
        <authorList>
            <person name="Egebjerg J."/>
            <person name="Bettler B."/>
            <person name="Hermans-Borgmeyer I."/>
            <person name="Heinemann S.F."/>
        </authorList>
    </citation>
    <scope>NUCLEOTIDE SEQUENCE [MRNA]</scope>
    <scope>FUNCTION</scope>
    <scope>SUBUNIT</scope>
    <scope>TISSUE SPECIFICITY</scope>
    <source>
        <strain>Sprague-Dawley</strain>
        <tissue>Brain</tissue>
    </source>
</reference>
<reference key="2">
    <citation type="journal article" date="1992" name="FEBS Lett.">
        <title>High-affinity kainate and domoate receptors in rat brain.</title>
        <authorList>
            <person name="Lomeli H."/>
            <person name="Wisden W."/>
            <person name="Koehler M."/>
            <person name="Keinaenen K."/>
            <person name="Sommer B."/>
            <person name="Seeburg P.H."/>
        </authorList>
    </citation>
    <scope>NUCLEOTIDE SEQUENCE [MRNA]</scope>
    <scope>FUNCTION</scope>
    <source>
        <tissue>Brain</tissue>
    </source>
</reference>
<reference key="3">
    <citation type="journal article" date="1993" name="Neuron">
        <title>Determinants of Ca2+ permeability in both TM1 and TM2 of high affinity kainate receptor channels: diversity by RNA editing.</title>
        <authorList>
            <person name="Koehler M."/>
            <person name="Burnashev N."/>
            <person name="Sakmann B."/>
            <person name="Seeburg P.H."/>
        </authorList>
    </citation>
    <scope>NUCLEOTIDE SEQUENCE [MRNA] OF 560-585</scope>
    <scope>RNA EDITING</scope>
    <scope>FUNCTION</scope>
    <scope>TRANSPORTER ACTIVITY</scope>
    <source>
        <tissue>Brain</tissue>
    </source>
</reference>
<reference key="4">
    <citation type="journal article" date="1993" name="Proc. Natl. Acad. Sci. U.S.A.">
        <title>Ca2+ permeability of unedited and edited versions of the kainate selective glutamate receptor GluR6.</title>
        <authorList>
            <person name="Egebjerg J."/>
            <person name="Heinemann S.F."/>
        </authorList>
    </citation>
    <scope>FUNCTION</scope>
    <scope>TRANSPORTER ACTIVITY</scope>
    <scope>RNA EDITING</scope>
</reference>
<reference key="5">
    <citation type="journal article" date="1994" name="J. Biol. Chem.">
        <title>Transmembrane topology of the glutamate receptor subunit GluR6.</title>
        <authorList>
            <person name="Roche K.W."/>
            <person name="Raymond L.A."/>
            <person name="Blackstone C."/>
            <person name="Huganir R.L."/>
        </authorList>
    </citation>
    <scope>FUNCTION</scope>
    <scope>SUBCELLULAR LOCATION</scope>
    <scope>TOPOLOGY</scope>
    <scope>GLYCOSYLATION AT ASN-751</scope>
    <scope>MUTAGENESIS OF ASN-751</scope>
</reference>
<reference key="6">
    <citation type="journal article" date="2002" name="J. Biol. Chem.">
        <title>The PDZ1 domain of SAP90. Characterization of structure and binding.</title>
        <authorList>
            <person name="Piserchio A."/>
            <person name="Pellegrini M."/>
            <person name="Mehta S."/>
            <person name="Blackman S.M."/>
            <person name="Garcia E.P."/>
            <person name="Marshall J."/>
            <person name="Mierke D.F."/>
        </authorList>
    </citation>
    <scope>INTERACTION WITH DLG4</scope>
</reference>
<reference key="7">
    <citation type="journal article" date="2006" name="J. Biol. Chem.">
        <title>Actinfilin is a Cul3 substrate adaptor, linking GluR6 kainate receptor subunits to the ubiquitin-proteasome pathway.</title>
        <authorList>
            <person name="Salinas G.D."/>
            <person name="Blair L.A."/>
            <person name="Needleman L.A."/>
            <person name="Gonzales J.D."/>
            <person name="Chen Y."/>
            <person name="Li M."/>
            <person name="Singer J.D."/>
            <person name="Marshall J."/>
        </authorList>
    </citation>
    <scope>INTERACTION WITH KLHL17</scope>
    <scope>UBIQUITINATION</scope>
    <scope>MUTAGENESIS OF VAL-883 AND ILE-884</scope>
</reference>
<reference key="8">
    <citation type="journal article" date="2007" name="Nature">
        <title>SUMOylation regulates kainate-receptor-mediated synaptic transmission.</title>
        <authorList>
            <person name="Martin S."/>
            <person name="Nishimune A."/>
            <person name="Mellor J.R."/>
            <person name="Henley J.M."/>
        </authorList>
    </citation>
    <scope>SUMOYLATION AT LYS-886</scope>
    <scope>FUNCTION</scope>
    <scope>SUBCELLULAR LOCATION</scope>
    <scope>MUTAGENESIS OF LYS-886</scope>
</reference>
<reference key="9">
    <citation type="journal article" date="2009" name="Neuron">
        <title>A transmembrane accessory subunit that modulates kainate-type glutamate receptors.</title>
        <authorList>
            <person name="Zhang W."/>
            <person name="St-Gelais F."/>
            <person name="Grabner C.P."/>
            <person name="Trinidad J.C."/>
            <person name="Sumioka A."/>
            <person name="Morimoto-Tomita M."/>
            <person name="Kim K.S."/>
            <person name="Straub C."/>
            <person name="Burlingame A.L."/>
            <person name="Howe J.R."/>
            <person name="Tomita S."/>
        </authorList>
    </citation>
    <scope>INTERACTION WITH NETO2</scope>
</reference>
<reference key="10">
    <citation type="journal article" date="2012" name="Cell Rep.">
        <title>Assembly stoichiometry of the GluK2/GluK5 kainate receptor complex.</title>
        <authorList>
            <person name="Reiner A."/>
            <person name="Arant R.J."/>
            <person name="Isacoff E.Y."/>
        </authorList>
    </citation>
    <scope>SUBUNIT</scope>
    <scope>SUBCELLULAR LOCATION</scope>
</reference>
<reference key="11">
    <citation type="journal article" date="2014" name="Neuroscience">
        <title>Contributions of different kainate receptor subunits to the properties of recombinant homomeric and heteromeric receptors.</title>
        <authorList>
            <person name="Fisher M.T."/>
            <person name="Fisher J.L."/>
        </authorList>
    </citation>
    <scope>FUNCTION</scope>
    <scope>SUBUNIT</scope>
</reference>
<reference key="12">
    <citation type="journal article" date="2005" name="Neuron">
        <title>Crystal structures of the GluR5 and GluR6 ligand binding cores: molecular mechanisms underlying kainate receptor selectivity.</title>
        <authorList>
            <person name="Mayer M.L."/>
        </authorList>
    </citation>
    <scope>X-RAY CRYSTALLOGRAPHY (1.65 ANGSTROMS) OF 429-806 IN COMPLEXES WITH GLUTAMATE; KAINATE; METHYLGLUTAMATE AND QUISQUALATE</scope>
</reference>
<reference key="13">
    <citation type="journal article" date="2005" name="Proc. Natl. Acad. Sci. U.S.A.">
        <title>Structure of the kainate receptor subunit GluR6 agonist-binding domain complexed with domoic acid.</title>
        <authorList>
            <person name="Nanao M.H."/>
            <person name="Green T."/>
            <person name="Stern-Bach Y."/>
            <person name="Heinemann S.F."/>
            <person name="Choe S."/>
        </authorList>
    </citation>
    <scope>X-RAY CRYSTALLOGRAPHY (3.11 ANGSTROMS) OF 419-819 IN COMPLEX WITH DOMOATE</scope>
    <scope>SUBUNIT</scope>
    <scope>GLYCOSYLATION AT ASN-423 AND ASN-751</scope>
</reference>
<reference key="14">
    <citation type="journal article" date="2006" name="Nat. Struct. Mol. Biol.">
        <title>Conformational restriction blocks glutamate receptor desensitization.</title>
        <authorList>
            <person name="Weston M.C."/>
            <person name="Schuck P."/>
            <person name="Ghosal A."/>
            <person name="Rosenmund C."/>
            <person name="Mayer M.L."/>
        </authorList>
    </citation>
    <scope>X-RAY CRYSTALLOGRAPHY (1.96 ANGSTROMS) OF 663-806 IN COMPLEX WITH GLUTAMATE</scope>
    <scope>FUNCTION</scope>
    <scope>SUBUNIT</scope>
</reference>
<reference key="15">
    <citation type="journal article" date="2011" name="Neuron">
        <title>Structure and assembly mechanism for heteromeric kainate receptors.</title>
        <authorList>
            <person name="Kumar J."/>
            <person name="Schuck P."/>
            <person name="Mayer M.L."/>
        </authorList>
    </citation>
    <scope>X-RAY CRYSTALLOGRAPHY (2.91 ANGSTROMS) OF 32-420 IN COMPLEX WITH GRIK5</scope>
    <scope>DISULFIDE BONDS</scope>
    <scope>GLYCOSYLATION AT ASN-67; ASN-378 AND ASN-412</scope>
    <scope>SUBUNIT</scope>
</reference>
<accession>P42260</accession>
<gene>
    <name type="primary">Grik2</name>
    <name type="synonym">Glur6</name>
</gene>
<organism>
    <name type="scientific">Rattus norvegicus</name>
    <name type="common">Rat</name>
    <dbReference type="NCBI Taxonomy" id="10116"/>
    <lineage>
        <taxon>Eukaryota</taxon>
        <taxon>Metazoa</taxon>
        <taxon>Chordata</taxon>
        <taxon>Craniata</taxon>
        <taxon>Vertebrata</taxon>
        <taxon>Euteleostomi</taxon>
        <taxon>Mammalia</taxon>
        <taxon>Eutheria</taxon>
        <taxon>Euarchontoglires</taxon>
        <taxon>Glires</taxon>
        <taxon>Rodentia</taxon>
        <taxon>Myomorpha</taxon>
        <taxon>Muroidea</taxon>
        <taxon>Muridae</taxon>
        <taxon>Murinae</taxon>
        <taxon>Rattus</taxon>
    </lineage>
</organism>
<dbReference type="EMBL" id="Z11548">
    <property type="protein sequence ID" value="CAA77647.1"/>
    <property type="molecule type" value="mRNA"/>
</dbReference>
<dbReference type="EMBL" id="Z11715">
    <property type="protein sequence ID" value="CAA77778.1"/>
    <property type="molecule type" value="mRNA"/>
</dbReference>
<dbReference type="PIR" id="S19098">
    <property type="entry name" value="S19098"/>
</dbReference>
<dbReference type="RefSeq" id="NP_062182.1">
    <property type="nucleotide sequence ID" value="NM_019309.2"/>
</dbReference>
<dbReference type="PDB" id="1S50">
    <property type="method" value="X-ray"/>
    <property type="resolution" value="1.65 A"/>
    <property type="chains" value="A=428-806"/>
</dbReference>
<dbReference type="PDB" id="1S7Y">
    <property type="method" value="X-ray"/>
    <property type="resolution" value="1.75 A"/>
    <property type="chains" value="A/B=429-544, A/B=667-806"/>
</dbReference>
<dbReference type="PDB" id="1S9T">
    <property type="method" value="X-ray"/>
    <property type="resolution" value="1.80 A"/>
    <property type="chains" value="A/B=429-544, A/B=667-806"/>
</dbReference>
<dbReference type="PDB" id="1SD3">
    <property type="method" value="X-ray"/>
    <property type="resolution" value="1.80 A"/>
    <property type="chains" value="A/B=429-544, A/B=667-806"/>
</dbReference>
<dbReference type="PDB" id="1TT1">
    <property type="method" value="X-ray"/>
    <property type="resolution" value="1.93 A"/>
    <property type="chains" value="A/B=429-806"/>
</dbReference>
<dbReference type="PDB" id="1YAE">
    <property type="method" value="X-ray"/>
    <property type="resolution" value="3.11 A"/>
    <property type="chains" value="A/B/C/D/E/F=419-557, A/B/C/D/E/F=662-819"/>
</dbReference>
<dbReference type="PDB" id="2I0B">
    <property type="method" value="X-ray"/>
    <property type="resolution" value="1.96 A"/>
    <property type="chains" value="A/B/C=429-544, A/B/C=667-806"/>
</dbReference>
<dbReference type="PDB" id="2I0C">
    <property type="method" value="X-ray"/>
    <property type="resolution" value="2.25 A"/>
    <property type="chains" value="A/B=429-544, A/B=667-806"/>
</dbReference>
<dbReference type="PDB" id="2XXR">
    <property type="method" value="X-ray"/>
    <property type="resolution" value="1.60 A"/>
    <property type="chains" value="A/B=429-544, A/B=667-806"/>
</dbReference>
<dbReference type="PDB" id="2XXT">
    <property type="method" value="X-ray"/>
    <property type="resolution" value="1.90 A"/>
    <property type="chains" value="A/B=667-806"/>
</dbReference>
<dbReference type="PDB" id="2XXU">
    <property type="method" value="X-ray"/>
    <property type="resolution" value="1.50 A"/>
    <property type="chains" value="A/B=667-806"/>
</dbReference>
<dbReference type="PDB" id="2XXV">
    <property type="method" value="X-ray"/>
    <property type="resolution" value="1.70 A"/>
    <property type="chains" value="A/B=667-806"/>
</dbReference>
<dbReference type="PDB" id="2XXW">
    <property type="method" value="X-ray"/>
    <property type="resolution" value="2.30 A"/>
    <property type="chains" value="A/B=667-806"/>
</dbReference>
<dbReference type="PDB" id="2XXX">
    <property type="method" value="X-ray"/>
    <property type="resolution" value="2.10 A"/>
    <property type="chains" value="A/B/C/D=667-806"/>
</dbReference>
<dbReference type="PDB" id="2XXY">
    <property type="method" value="X-ray"/>
    <property type="resolution" value="3.00 A"/>
    <property type="chains" value="A/B/C/D=667-806"/>
</dbReference>
<dbReference type="PDB" id="3G3F">
    <property type="method" value="X-ray"/>
    <property type="resolution" value="1.38 A"/>
    <property type="chains" value="A/B=429-544, A/B=667-806"/>
</dbReference>
<dbReference type="PDB" id="3G3G">
    <property type="method" value="X-ray"/>
    <property type="resolution" value="1.30 A"/>
    <property type="chains" value="A/B=429-544, A/B=667-806"/>
</dbReference>
<dbReference type="PDB" id="3G3H">
    <property type="method" value="X-ray"/>
    <property type="resolution" value="1.50 A"/>
    <property type="chains" value="A/B=429-544, A/B=667-806"/>
</dbReference>
<dbReference type="PDB" id="3G3I">
    <property type="method" value="X-ray"/>
    <property type="resolution" value="1.37 A"/>
    <property type="chains" value="A/B=429-544, A/B=667-806"/>
</dbReference>
<dbReference type="PDB" id="3G3J">
    <property type="method" value="X-ray"/>
    <property type="resolution" value="1.32 A"/>
    <property type="chains" value="A/B=429-544, A/B=667-806"/>
</dbReference>
<dbReference type="PDB" id="3G3K">
    <property type="method" value="X-ray"/>
    <property type="resolution" value="1.24 A"/>
    <property type="chains" value="A/B=429-544, A/B=667-806"/>
</dbReference>
<dbReference type="PDB" id="3H6G">
    <property type="method" value="X-ray"/>
    <property type="resolution" value="2.70 A"/>
    <property type="chains" value="A/B=32-420"/>
</dbReference>
<dbReference type="PDB" id="3H6H">
    <property type="method" value="X-ray"/>
    <property type="resolution" value="2.90 A"/>
    <property type="chains" value="A/B=32-420"/>
</dbReference>
<dbReference type="PDB" id="3QLT">
    <property type="method" value="X-ray"/>
    <property type="resolution" value="2.99 A"/>
    <property type="chains" value="A/B=32-420"/>
</dbReference>
<dbReference type="PDB" id="3QLU">
    <property type="method" value="X-ray"/>
    <property type="resolution" value="2.91 A"/>
    <property type="chains" value="C/D=32-420"/>
</dbReference>
<dbReference type="PDB" id="3QLV">
    <property type="method" value="X-ray"/>
    <property type="resolution" value="3.94 A"/>
    <property type="chains" value="C/D/F/H/J=32-420"/>
</dbReference>
<dbReference type="PDB" id="4BDL">
    <property type="method" value="X-ray"/>
    <property type="resolution" value="1.75 A"/>
    <property type="chains" value="A/B=429-544, A/B=667-806"/>
</dbReference>
<dbReference type="PDB" id="4BDM">
    <property type="method" value="X-ray"/>
    <property type="resolution" value="3.40 A"/>
    <property type="chains" value="A/B/C/D=429-544, A/B/C/D=667-806"/>
</dbReference>
<dbReference type="PDB" id="4BDN">
    <property type="method" value="X-ray"/>
    <property type="resolution" value="2.50 A"/>
    <property type="chains" value="A/B/C/D=429-544, A/B/C/D=667-806"/>
</dbReference>
<dbReference type="PDB" id="4BDO">
    <property type="method" value="X-ray"/>
    <property type="resolution" value="2.55 A"/>
    <property type="chains" value="A/B/C/D=429-544, A/B/C/D=667-806"/>
</dbReference>
<dbReference type="PDB" id="4BDQ">
    <property type="method" value="X-ray"/>
    <property type="resolution" value="1.90 A"/>
    <property type="chains" value="A/B=429-544, A/B=667-806"/>
</dbReference>
<dbReference type="PDB" id="4BDR">
    <property type="method" value="X-ray"/>
    <property type="resolution" value="1.65 A"/>
    <property type="chains" value="A/B=429-544, A/B=667-806"/>
</dbReference>
<dbReference type="PDB" id="4H8I">
    <property type="method" value="X-ray"/>
    <property type="resolution" value="2.00 A"/>
    <property type="chains" value="A/B=429-544, A/B=667-806"/>
</dbReference>
<dbReference type="PDB" id="4UQQ">
    <property type="method" value="EM"/>
    <property type="resolution" value="7.60 A"/>
    <property type="chains" value="A/B/C/D=32-908"/>
</dbReference>
<dbReference type="PDB" id="5CMK">
    <property type="method" value="X-ray"/>
    <property type="resolution" value="1.80 A"/>
    <property type="chains" value="A/B=429-544, A/B=667-806"/>
</dbReference>
<dbReference type="PDB" id="5CMM">
    <property type="method" value="X-ray"/>
    <property type="resolution" value="1.27 A"/>
    <property type="chains" value="A=429-544"/>
</dbReference>
<dbReference type="PDB" id="5KUF">
    <property type="method" value="EM"/>
    <property type="resolution" value="3.80 A"/>
    <property type="chains" value="A/B/C/D=32-908"/>
</dbReference>
<dbReference type="PDB" id="5KUH">
    <property type="method" value="EM"/>
    <property type="resolution" value="11.60 A"/>
    <property type="chains" value="A/B/C/D=32-544, A/B/C/D=667-908"/>
</dbReference>
<dbReference type="PDB" id="7F56">
    <property type="method" value="EM"/>
    <property type="resolution" value="4.10 A"/>
    <property type="chains" value="A/B/C/D=1-908"/>
</dbReference>
<dbReference type="PDB" id="7F57">
    <property type="method" value="EM"/>
    <property type="resolution" value="3.80 A"/>
    <property type="chains" value="A/B/C/D=1-908"/>
</dbReference>
<dbReference type="PDB" id="7F59">
    <property type="method" value="EM"/>
    <property type="resolution" value="4.20 A"/>
    <property type="chains" value="A/B/C/D=1-908"/>
</dbReference>
<dbReference type="PDB" id="7F5A">
    <property type="method" value="EM"/>
    <property type="resolution" value="6.40 A"/>
    <property type="chains" value="A/B/C/D=1-908"/>
</dbReference>
<dbReference type="PDB" id="7F5B">
    <property type="method" value="EM"/>
    <property type="resolution" value="3.90 A"/>
    <property type="chains" value="A/B/C/D=1-908"/>
</dbReference>
<dbReference type="PDB" id="7KS0">
    <property type="method" value="EM"/>
    <property type="resolution" value="5.30 A"/>
    <property type="chains" value="B/D=1-908"/>
</dbReference>
<dbReference type="PDB" id="7KS3">
    <property type="method" value="EM"/>
    <property type="resolution" value="5.80 A"/>
    <property type="chains" value="B/D=1-908"/>
</dbReference>
<dbReference type="PDB" id="8F0O">
    <property type="method" value="EM"/>
    <property type="resolution" value="2.99 A"/>
    <property type="chains" value="A/B/C/D=1-908"/>
</dbReference>
<dbReference type="PDB" id="8FWQ">
    <property type="method" value="EM"/>
    <property type="resolution" value="3.96 A"/>
    <property type="chains" value="A/B/C/D=1-908"/>
</dbReference>
<dbReference type="PDB" id="8FWR">
    <property type="method" value="EM"/>
    <property type="resolution" value="3.10 A"/>
    <property type="chains" value="A/B/C/D=1-908"/>
</dbReference>
<dbReference type="PDB" id="8FWS">
    <property type="method" value="EM"/>
    <property type="resolution" value="3.23 A"/>
    <property type="chains" value="A/B/C/D=1-908"/>
</dbReference>
<dbReference type="PDB" id="8FWT">
    <property type="method" value="EM"/>
    <property type="resolution" value="3.09 A"/>
    <property type="chains" value="A/B/C/D=1-908"/>
</dbReference>
<dbReference type="PDB" id="8FWU">
    <property type="method" value="EM"/>
    <property type="resolution" value="3.18 A"/>
    <property type="chains" value="A/B/C/D=1-908"/>
</dbReference>
<dbReference type="PDB" id="8FWV">
    <property type="method" value="EM"/>
    <property type="resolution" value="3.03 A"/>
    <property type="chains" value="A/B/C/D=1-908"/>
</dbReference>
<dbReference type="PDB" id="8FWW">
    <property type="method" value="EM"/>
    <property type="resolution" value="3.10 A"/>
    <property type="chains" value="A/B/C/D=1-908"/>
</dbReference>
<dbReference type="PDB" id="8GC2">
    <property type="method" value="EM"/>
    <property type="resolution" value="4.10 A"/>
    <property type="chains" value="A/B/C/D=34-908"/>
</dbReference>
<dbReference type="PDB" id="8GC3">
    <property type="method" value="EM"/>
    <property type="resolution" value="3.80 A"/>
    <property type="chains" value="A/B/C/D=34-908"/>
</dbReference>
<dbReference type="PDB" id="8GC4">
    <property type="method" value="EM"/>
    <property type="resolution" value="3.93 A"/>
    <property type="chains" value="A/B/C/D=34-908"/>
</dbReference>
<dbReference type="PDB" id="8GC5">
    <property type="method" value="EM"/>
    <property type="resolution" value="3.93 A"/>
    <property type="chains" value="A/B/C/D=34-908"/>
</dbReference>
<dbReference type="PDB" id="8R32">
    <property type="method" value="X-ray"/>
    <property type="resolution" value="1.60 A"/>
    <property type="chains" value="A/B=429-544, A/B=667-805"/>
</dbReference>
<dbReference type="PDB" id="9B35">
    <property type="method" value="EM"/>
    <property type="resolution" value="3.40 A"/>
    <property type="chains" value="A/B/C/D=1-908"/>
</dbReference>
<dbReference type="PDB" id="9B36">
    <property type="method" value="EM"/>
    <property type="resolution" value="4.29 A"/>
    <property type="chains" value="A/B/C/D=1-908"/>
</dbReference>
<dbReference type="PDB" id="9B37">
    <property type="method" value="EM"/>
    <property type="resolution" value="6.66 A"/>
    <property type="chains" value="A/B/C/D=1-908"/>
</dbReference>
<dbReference type="PDB" id="9B38">
    <property type="method" value="EM"/>
    <property type="resolution" value="3.36 A"/>
    <property type="chains" value="A/B/C/D=1-908"/>
</dbReference>
<dbReference type="PDB" id="9B39">
    <property type="method" value="EM"/>
    <property type="resolution" value="3.84 A"/>
    <property type="chains" value="A/B/C/D=1-908"/>
</dbReference>
<dbReference type="PDB" id="9DXQ">
    <property type="method" value="EM"/>
    <property type="resolution" value="2.81 A"/>
    <property type="chains" value="A/B/C/D=1-908"/>
</dbReference>
<dbReference type="PDB" id="9DXR">
    <property type="method" value="EM"/>
    <property type="resolution" value="3.10 A"/>
    <property type="chains" value="A/B/C/D=1-908"/>
</dbReference>
<dbReference type="PDB" id="9DXS">
    <property type="method" value="EM"/>
    <property type="resolution" value="3.55 A"/>
    <property type="chains" value="A/B/C/D=1-908"/>
</dbReference>
<dbReference type="PDB" id="9DXT">
    <property type="method" value="EM"/>
    <property type="resolution" value="3.75 A"/>
    <property type="chains" value="A/B/C/D=1-908"/>
</dbReference>
<dbReference type="PDBsum" id="1S50"/>
<dbReference type="PDBsum" id="1S7Y"/>
<dbReference type="PDBsum" id="1S9T"/>
<dbReference type="PDBsum" id="1SD3"/>
<dbReference type="PDBsum" id="1TT1"/>
<dbReference type="PDBsum" id="1YAE"/>
<dbReference type="PDBsum" id="2I0B"/>
<dbReference type="PDBsum" id="2I0C"/>
<dbReference type="PDBsum" id="2XXR"/>
<dbReference type="PDBsum" id="2XXT"/>
<dbReference type="PDBsum" id="2XXU"/>
<dbReference type="PDBsum" id="2XXV"/>
<dbReference type="PDBsum" id="2XXW"/>
<dbReference type="PDBsum" id="2XXX"/>
<dbReference type="PDBsum" id="2XXY"/>
<dbReference type="PDBsum" id="3G3F"/>
<dbReference type="PDBsum" id="3G3G"/>
<dbReference type="PDBsum" id="3G3H"/>
<dbReference type="PDBsum" id="3G3I"/>
<dbReference type="PDBsum" id="3G3J"/>
<dbReference type="PDBsum" id="3G3K"/>
<dbReference type="PDBsum" id="3H6G"/>
<dbReference type="PDBsum" id="3H6H"/>
<dbReference type="PDBsum" id="3QLT"/>
<dbReference type="PDBsum" id="3QLU"/>
<dbReference type="PDBsum" id="3QLV"/>
<dbReference type="PDBsum" id="4BDL"/>
<dbReference type="PDBsum" id="4BDM"/>
<dbReference type="PDBsum" id="4BDN"/>
<dbReference type="PDBsum" id="4BDO"/>
<dbReference type="PDBsum" id="4BDQ"/>
<dbReference type="PDBsum" id="4BDR"/>
<dbReference type="PDBsum" id="4H8I"/>
<dbReference type="PDBsum" id="4UQQ"/>
<dbReference type="PDBsum" id="5CMK"/>
<dbReference type="PDBsum" id="5CMM"/>
<dbReference type="PDBsum" id="5KUF"/>
<dbReference type="PDBsum" id="5KUH"/>
<dbReference type="PDBsum" id="7F56"/>
<dbReference type="PDBsum" id="7F57"/>
<dbReference type="PDBsum" id="7F59"/>
<dbReference type="PDBsum" id="7F5A"/>
<dbReference type="PDBsum" id="7F5B"/>
<dbReference type="PDBsum" id="7KS0"/>
<dbReference type="PDBsum" id="7KS3"/>
<dbReference type="PDBsum" id="8F0O"/>
<dbReference type="PDBsum" id="8FWQ"/>
<dbReference type="PDBsum" id="8FWR"/>
<dbReference type="PDBsum" id="8FWS"/>
<dbReference type="PDBsum" id="8FWT"/>
<dbReference type="PDBsum" id="8FWU"/>
<dbReference type="PDBsum" id="8FWV"/>
<dbReference type="PDBsum" id="8FWW"/>
<dbReference type="PDBsum" id="8GC2"/>
<dbReference type="PDBsum" id="8GC3"/>
<dbReference type="PDBsum" id="8GC4"/>
<dbReference type="PDBsum" id="8GC5"/>
<dbReference type="PDBsum" id="8R32"/>
<dbReference type="PDBsum" id="9B35"/>
<dbReference type="PDBsum" id="9B36"/>
<dbReference type="PDBsum" id="9B37"/>
<dbReference type="PDBsum" id="9B38"/>
<dbReference type="PDBsum" id="9B39"/>
<dbReference type="PDBsum" id="9DXQ"/>
<dbReference type="PDBsum" id="9DXR"/>
<dbReference type="PDBsum" id="9DXS"/>
<dbReference type="PDBsum" id="9DXT"/>
<dbReference type="EMDB" id="EMD-23014"/>
<dbReference type="EMDB" id="EMD-23015"/>
<dbReference type="EMDB" id="EMD-2685"/>
<dbReference type="EMDB" id="EMD-28775"/>
<dbReference type="EMDB" id="EMD-29515"/>
<dbReference type="EMDB" id="EMD-29516"/>
<dbReference type="EMDB" id="EMD-29517"/>
<dbReference type="EMDB" id="EMD-29518"/>
<dbReference type="EMDB" id="EMD-29519"/>
<dbReference type="EMDB" id="EMD-29520"/>
<dbReference type="EMDB" id="EMD-29521"/>
<dbReference type="EMDB" id="EMD-29926"/>
<dbReference type="EMDB" id="EMD-29927"/>
<dbReference type="EMDB" id="EMD-29928"/>
<dbReference type="EMDB" id="EMD-29929"/>
<dbReference type="EMDB" id="EMD-31459"/>
<dbReference type="EMDB" id="EMD-31460"/>
<dbReference type="EMDB" id="EMD-31462"/>
<dbReference type="EMDB" id="EMD-31463"/>
<dbReference type="EMDB" id="EMD-31464"/>
<dbReference type="EMDB" id="EMD-44128"/>
<dbReference type="EMDB" id="EMD-44129"/>
<dbReference type="EMDB" id="EMD-44130"/>
<dbReference type="EMDB" id="EMD-44131"/>
<dbReference type="EMDB" id="EMD-44132"/>
<dbReference type="EMDB" id="EMD-47295"/>
<dbReference type="EMDB" id="EMD-47296"/>
<dbReference type="EMDB" id="EMD-47297"/>
<dbReference type="EMDB" id="EMD-47298"/>
<dbReference type="EMDB" id="EMD-8289"/>
<dbReference type="EMDB" id="EMD-8290"/>
<dbReference type="SMR" id="P42260"/>
<dbReference type="BioGRID" id="248480">
    <property type="interactions" value="8"/>
</dbReference>
<dbReference type="ComplexPortal" id="CPX-8602">
    <property type="entry name" value="GluK1-GluK2 glutamate ionotropic kainate-type receptor complex"/>
</dbReference>
<dbReference type="ComplexPortal" id="CPX-8603">
    <property type="entry name" value="GluK2-GluK5 glutamate ionotropic kainate-type receptor complex"/>
</dbReference>
<dbReference type="ComplexPortal" id="CPX-8609">
    <property type="entry name" value="GluK1-GluK2-GluK5 glutamate ionotropic kainate-type receptor complex"/>
</dbReference>
<dbReference type="ComplexPortal" id="CPX-8610">
    <property type="entry name" value="GluK1-GluK2-GluK3-GluK5 glutamate ionotropic kainate-type receptor complex"/>
</dbReference>
<dbReference type="ComplexPortal" id="CPX-8614">
    <property type="entry name" value="GluK2-GluK3 glutamate ionotropic kainate-type receptor complex"/>
</dbReference>
<dbReference type="ComplexPortal" id="CPX-8635">
    <property type="entry name" value="GluK2 glutamate ionotropic kainate-type receptor complex"/>
</dbReference>
<dbReference type="CORUM" id="P42260"/>
<dbReference type="DIP" id="DIP-29256N"/>
<dbReference type="ELM" id="P42260"/>
<dbReference type="FunCoup" id="P42260">
    <property type="interactions" value="1284"/>
</dbReference>
<dbReference type="IntAct" id="P42260">
    <property type="interactions" value="8"/>
</dbReference>
<dbReference type="MINT" id="P42260"/>
<dbReference type="STRING" id="10116.ENSRNOP00000068172"/>
<dbReference type="BindingDB" id="P42260"/>
<dbReference type="ChEMBL" id="CHEMBL3607"/>
<dbReference type="DrugCentral" id="P42260"/>
<dbReference type="GuidetoPHARMACOLOGY" id="451"/>
<dbReference type="TCDB" id="1.A.10.1.11">
    <property type="family name" value="the glutamate-gated ion channel (gic) family of neurotransmitter receptors"/>
</dbReference>
<dbReference type="GlyCosmos" id="P42260">
    <property type="glycosylation" value="9 sites, No reported glycans"/>
</dbReference>
<dbReference type="GlyGen" id="P42260">
    <property type="glycosylation" value="9 sites"/>
</dbReference>
<dbReference type="iPTMnet" id="P42260"/>
<dbReference type="PhosphoSitePlus" id="P42260"/>
<dbReference type="PaxDb" id="10116-ENSRNOP00000068172"/>
<dbReference type="Ensembl" id="ENSRNOT00000076234.2">
    <property type="protein sequence ID" value="ENSRNOP00000068172.1"/>
    <property type="gene ID" value="ENSRNOG00000000368.8"/>
</dbReference>
<dbReference type="GeneID" id="54257"/>
<dbReference type="KEGG" id="rno:54257"/>
<dbReference type="UCSC" id="RGD:2733">
    <property type="organism name" value="rat"/>
</dbReference>
<dbReference type="AGR" id="RGD:2733"/>
<dbReference type="CTD" id="2898"/>
<dbReference type="RGD" id="2733">
    <property type="gene designation" value="Grik2"/>
</dbReference>
<dbReference type="eggNOG" id="KOG1052">
    <property type="taxonomic scope" value="Eukaryota"/>
</dbReference>
<dbReference type="GeneTree" id="ENSGT00940000155610"/>
<dbReference type="InParanoid" id="P42260"/>
<dbReference type="OMA" id="QCKFRVI"/>
<dbReference type="OrthoDB" id="5984008at2759"/>
<dbReference type="PhylomeDB" id="P42260"/>
<dbReference type="Reactome" id="R-RNO-451307">
    <property type="pathway name" value="Activation of Na-permeable kainate receptors"/>
</dbReference>
<dbReference type="Reactome" id="R-RNO-451308">
    <property type="pathway name" value="Activation of Ca-permeable Kainate Receptor"/>
</dbReference>
<dbReference type="EvolutionaryTrace" id="P42260"/>
<dbReference type="PRO" id="PR:P42260"/>
<dbReference type="Proteomes" id="UP000002494">
    <property type="component" value="Chromosome 20"/>
</dbReference>
<dbReference type="Bgee" id="ENSRNOG00000000368">
    <property type="expression patterns" value="Expressed in cerebellum and 11 other cell types or tissues"/>
</dbReference>
<dbReference type="ExpressionAtlas" id="P42260">
    <property type="expression patterns" value="baseline and differential"/>
</dbReference>
<dbReference type="GO" id="GO:0030424">
    <property type="term" value="C:axon"/>
    <property type="evidence" value="ECO:0000314"/>
    <property type="project" value="RGD"/>
</dbReference>
<dbReference type="GO" id="GO:0030425">
    <property type="term" value="C:dendrite"/>
    <property type="evidence" value="ECO:0000314"/>
    <property type="project" value="UniProtKB"/>
</dbReference>
<dbReference type="GO" id="GO:0032839">
    <property type="term" value="C:dendrite cytoplasm"/>
    <property type="evidence" value="ECO:0000314"/>
    <property type="project" value="RGD"/>
</dbReference>
<dbReference type="GO" id="GO:0098978">
    <property type="term" value="C:glutamatergic synapse"/>
    <property type="evidence" value="ECO:0000266"/>
    <property type="project" value="RGD"/>
</dbReference>
<dbReference type="GO" id="GO:0098686">
    <property type="term" value="C:hippocampal mossy fiber to CA3 synapse"/>
    <property type="evidence" value="ECO:0000266"/>
    <property type="project" value="RGD"/>
</dbReference>
<dbReference type="GO" id="GO:0008328">
    <property type="term" value="C:ionotropic glutamate receptor complex"/>
    <property type="evidence" value="ECO:0000314"/>
    <property type="project" value="UniProtKB"/>
</dbReference>
<dbReference type="GO" id="GO:0032983">
    <property type="term" value="C:kainate selective glutamate receptor complex"/>
    <property type="evidence" value="ECO:0000266"/>
    <property type="project" value="RGD"/>
</dbReference>
<dbReference type="GO" id="GO:0016020">
    <property type="term" value="C:membrane"/>
    <property type="evidence" value="ECO:0000266"/>
    <property type="project" value="RGD"/>
</dbReference>
<dbReference type="GO" id="GO:0097471">
    <property type="term" value="C:mossy fiber rosette"/>
    <property type="evidence" value="ECO:0000266"/>
    <property type="project" value="RGD"/>
</dbReference>
<dbReference type="GO" id="GO:0043025">
    <property type="term" value="C:neuronal cell body"/>
    <property type="evidence" value="ECO:0000266"/>
    <property type="project" value="RGD"/>
</dbReference>
<dbReference type="GO" id="GO:0043204">
    <property type="term" value="C:perikaryon"/>
    <property type="evidence" value="ECO:0000314"/>
    <property type="project" value="RGD"/>
</dbReference>
<dbReference type="GO" id="GO:0005886">
    <property type="term" value="C:plasma membrane"/>
    <property type="evidence" value="ECO:0000314"/>
    <property type="project" value="UniProtKB"/>
</dbReference>
<dbReference type="GO" id="GO:0014069">
    <property type="term" value="C:postsynaptic density"/>
    <property type="evidence" value="ECO:0000266"/>
    <property type="project" value="RGD"/>
</dbReference>
<dbReference type="GO" id="GO:0098839">
    <property type="term" value="C:postsynaptic density membrane"/>
    <property type="evidence" value="ECO:0000318"/>
    <property type="project" value="GO_Central"/>
</dbReference>
<dbReference type="GO" id="GO:0045211">
    <property type="term" value="C:postsynaptic membrane"/>
    <property type="evidence" value="ECO:0000266"/>
    <property type="project" value="RGD"/>
</dbReference>
<dbReference type="GO" id="GO:0042734">
    <property type="term" value="C:presynaptic membrane"/>
    <property type="evidence" value="ECO:0000266"/>
    <property type="project" value="RGD"/>
</dbReference>
<dbReference type="GO" id="GO:0045202">
    <property type="term" value="C:synapse"/>
    <property type="evidence" value="ECO:0000266"/>
    <property type="project" value="RGD"/>
</dbReference>
<dbReference type="GO" id="GO:0043195">
    <property type="term" value="C:terminal bouton"/>
    <property type="evidence" value="ECO:0000314"/>
    <property type="project" value="RGD"/>
</dbReference>
<dbReference type="GO" id="GO:0005234">
    <property type="term" value="F:extracellularly glutamate-gated ion channel activity"/>
    <property type="evidence" value="ECO:0000250"/>
    <property type="project" value="UniProtKB"/>
</dbReference>
<dbReference type="GO" id="GO:0008066">
    <property type="term" value="F:glutamate receptor activity"/>
    <property type="evidence" value="ECO:0000314"/>
    <property type="project" value="UniProtKB"/>
</dbReference>
<dbReference type="GO" id="GO:0022849">
    <property type="term" value="F:glutamate-gated calcium ion channel activity"/>
    <property type="evidence" value="ECO:0000314"/>
    <property type="project" value="UniProtKB"/>
</dbReference>
<dbReference type="GO" id="GO:0004970">
    <property type="term" value="F:glutamate-gated receptor activity"/>
    <property type="evidence" value="ECO:0000314"/>
    <property type="project" value="UniProtKB"/>
</dbReference>
<dbReference type="GO" id="GO:0042802">
    <property type="term" value="F:identical protein binding"/>
    <property type="evidence" value="ECO:0000314"/>
    <property type="project" value="RGD"/>
</dbReference>
<dbReference type="GO" id="GO:0015277">
    <property type="term" value="F:kainate selective glutamate receptor activity"/>
    <property type="evidence" value="ECO:0000314"/>
    <property type="project" value="UniProtKB"/>
</dbReference>
<dbReference type="GO" id="GO:0099507">
    <property type="term" value="F:ligand-gated monoatomic ion channel activity involved in regulation of presynaptic membrane potential"/>
    <property type="evidence" value="ECO:0000266"/>
    <property type="project" value="RGD"/>
</dbReference>
<dbReference type="GO" id="GO:0030165">
    <property type="term" value="F:PDZ domain binding"/>
    <property type="evidence" value="ECO:0000353"/>
    <property type="project" value="UniProtKB"/>
</dbReference>
<dbReference type="GO" id="GO:0097110">
    <property type="term" value="F:scaffold protein binding"/>
    <property type="evidence" value="ECO:0000314"/>
    <property type="project" value="RGD"/>
</dbReference>
<dbReference type="GO" id="GO:0000149">
    <property type="term" value="F:SNARE binding"/>
    <property type="evidence" value="ECO:0000353"/>
    <property type="project" value="RGD"/>
</dbReference>
<dbReference type="GO" id="GO:1904315">
    <property type="term" value="F:transmitter-gated monoatomic ion channel activity involved in regulation of postsynaptic membrane potential"/>
    <property type="evidence" value="ECO:0000266"/>
    <property type="project" value="RGD"/>
</dbReference>
<dbReference type="GO" id="GO:0031624">
    <property type="term" value="F:ubiquitin conjugating enzyme binding"/>
    <property type="evidence" value="ECO:0000353"/>
    <property type="project" value="RGD"/>
</dbReference>
<dbReference type="GO" id="GO:0031625">
    <property type="term" value="F:ubiquitin protein ligase binding"/>
    <property type="evidence" value="ECO:0000353"/>
    <property type="project" value="RGD"/>
</dbReference>
<dbReference type="GO" id="GO:0001662">
    <property type="term" value="P:behavioral fear response"/>
    <property type="evidence" value="ECO:0000266"/>
    <property type="project" value="RGD"/>
</dbReference>
<dbReference type="GO" id="GO:0007268">
    <property type="term" value="P:chemical synaptic transmission"/>
    <property type="evidence" value="ECO:0000315"/>
    <property type="project" value="RGD"/>
</dbReference>
<dbReference type="GO" id="GO:0120169">
    <property type="term" value="P:detection of cold stimulus involved in thermoception"/>
    <property type="evidence" value="ECO:0000250"/>
    <property type="project" value="UniProtKB"/>
</dbReference>
<dbReference type="GO" id="GO:0060079">
    <property type="term" value="P:excitatory postsynaptic potential"/>
    <property type="evidence" value="ECO:0000266"/>
    <property type="project" value="RGD"/>
</dbReference>
<dbReference type="GO" id="GO:0060080">
    <property type="term" value="P:inhibitory postsynaptic potential"/>
    <property type="evidence" value="ECO:0000266"/>
    <property type="project" value="RGD"/>
</dbReference>
<dbReference type="GO" id="GO:0006874">
    <property type="term" value="P:intracellular calcium ion homeostasis"/>
    <property type="evidence" value="ECO:0000266"/>
    <property type="project" value="RGD"/>
</dbReference>
<dbReference type="GO" id="GO:0050804">
    <property type="term" value="P:modulation of chemical synaptic transmission"/>
    <property type="evidence" value="ECO:0000266"/>
    <property type="project" value="RGD"/>
</dbReference>
<dbReference type="GO" id="GO:0098815">
    <property type="term" value="P:modulation of excitatory postsynaptic potential"/>
    <property type="evidence" value="ECO:0000315"/>
    <property type="project" value="RGD"/>
</dbReference>
<dbReference type="GO" id="GO:0043524">
    <property type="term" value="P:negative regulation of neuron apoptotic process"/>
    <property type="evidence" value="ECO:0000266"/>
    <property type="project" value="RGD"/>
</dbReference>
<dbReference type="GO" id="GO:0051967">
    <property type="term" value="P:negative regulation of synaptic transmission, glutamatergic"/>
    <property type="evidence" value="ECO:0000314"/>
    <property type="project" value="UniProtKB"/>
</dbReference>
<dbReference type="GO" id="GO:0051402">
    <property type="term" value="P:neuron apoptotic process"/>
    <property type="evidence" value="ECO:0000315"/>
    <property type="project" value="UniProtKB"/>
</dbReference>
<dbReference type="GO" id="GO:0019228">
    <property type="term" value="P:neuronal action potential"/>
    <property type="evidence" value="ECO:0000266"/>
    <property type="project" value="RGD"/>
</dbReference>
<dbReference type="GO" id="GO:0043525">
    <property type="term" value="P:positive regulation of neuron apoptotic process"/>
    <property type="evidence" value="ECO:0000315"/>
    <property type="project" value="RGD"/>
</dbReference>
<dbReference type="GO" id="GO:0050806">
    <property type="term" value="P:positive regulation of synaptic transmission"/>
    <property type="evidence" value="ECO:0000266"/>
    <property type="project" value="RGD"/>
</dbReference>
<dbReference type="GO" id="GO:0099171">
    <property type="term" value="P:presynaptic modulation of chemical synaptic transmission"/>
    <property type="evidence" value="ECO:0000266"/>
    <property type="project" value="RGD"/>
</dbReference>
<dbReference type="GO" id="GO:0043113">
    <property type="term" value="P:receptor clustering"/>
    <property type="evidence" value="ECO:0000314"/>
    <property type="project" value="UniProtKB"/>
</dbReference>
<dbReference type="GO" id="GO:0046328">
    <property type="term" value="P:regulation of JNK cascade"/>
    <property type="evidence" value="ECO:0000315"/>
    <property type="project" value="UniProtKB"/>
</dbReference>
<dbReference type="GO" id="GO:0048169">
    <property type="term" value="P:regulation of long-term neuronal synaptic plasticity"/>
    <property type="evidence" value="ECO:0000266"/>
    <property type="project" value="RGD"/>
</dbReference>
<dbReference type="GO" id="GO:0042391">
    <property type="term" value="P:regulation of membrane potential"/>
    <property type="evidence" value="ECO:0000266"/>
    <property type="project" value="RGD"/>
</dbReference>
<dbReference type="GO" id="GO:0048172">
    <property type="term" value="P:regulation of short-term neuronal synaptic plasticity"/>
    <property type="evidence" value="ECO:0000266"/>
    <property type="project" value="RGD"/>
</dbReference>
<dbReference type="GO" id="GO:0035249">
    <property type="term" value="P:synaptic transmission, glutamatergic"/>
    <property type="evidence" value="ECO:0000266"/>
    <property type="project" value="RGD"/>
</dbReference>
<dbReference type="CDD" id="cd06382">
    <property type="entry name" value="PBP1_iGluR_Kainate"/>
    <property type="match status" value="1"/>
</dbReference>
<dbReference type="FunFam" id="3.40.50.2300:FF:000010">
    <property type="entry name" value="Glutamate ionotropic receptor kainate type subunit 1"/>
    <property type="match status" value="1"/>
</dbReference>
<dbReference type="FunFam" id="3.40.190.10:FF:000210">
    <property type="entry name" value="Glutamate receptor ionotropic, kainate 1"/>
    <property type="match status" value="1"/>
</dbReference>
<dbReference type="FunFam" id="3.40.190.10:FF:000240">
    <property type="entry name" value="Glutamate receptor ionotropic, kainate 2"/>
    <property type="match status" value="1"/>
</dbReference>
<dbReference type="FunFam" id="1.10.287.70:FF:000010">
    <property type="entry name" value="Putative glutamate receptor ionotropic kainate 1"/>
    <property type="match status" value="1"/>
</dbReference>
<dbReference type="Gene3D" id="1.10.287.70">
    <property type="match status" value="1"/>
</dbReference>
<dbReference type="Gene3D" id="3.40.50.2300">
    <property type="match status" value="2"/>
</dbReference>
<dbReference type="Gene3D" id="3.40.190.10">
    <property type="entry name" value="Periplasmic binding protein-like II"/>
    <property type="match status" value="1"/>
</dbReference>
<dbReference type="InterPro" id="IPR001828">
    <property type="entry name" value="ANF_lig-bd_rcpt"/>
</dbReference>
<dbReference type="InterPro" id="IPR019594">
    <property type="entry name" value="Glu/Gly-bd"/>
</dbReference>
<dbReference type="InterPro" id="IPR001508">
    <property type="entry name" value="Iono_Glu_rcpt_met"/>
</dbReference>
<dbReference type="InterPro" id="IPR015683">
    <property type="entry name" value="Ionotropic_Glu_rcpt"/>
</dbReference>
<dbReference type="InterPro" id="IPR001320">
    <property type="entry name" value="Iontro_rcpt_C"/>
</dbReference>
<dbReference type="InterPro" id="IPR028082">
    <property type="entry name" value="Peripla_BP_I"/>
</dbReference>
<dbReference type="PANTHER" id="PTHR18966">
    <property type="entry name" value="IONOTROPIC GLUTAMATE RECEPTOR"/>
    <property type="match status" value="1"/>
</dbReference>
<dbReference type="Pfam" id="PF01094">
    <property type="entry name" value="ANF_receptor"/>
    <property type="match status" value="1"/>
</dbReference>
<dbReference type="Pfam" id="PF00060">
    <property type="entry name" value="Lig_chan"/>
    <property type="match status" value="1"/>
</dbReference>
<dbReference type="Pfam" id="PF10613">
    <property type="entry name" value="Lig_chan-Glu_bd"/>
    <property type="match status" value="1"/>
</dbReference>
<dbReference type="PRINTS" id="PR00177">
    <property type="entry name" value="NMDARECEPTOR"/>
</dbReference>
<dbReference type="SMART" id="SM00918">
    <property type="entry name" value="Lig_chan-Glu_bd"/>
    <property type="match status" value="1"/>
</dbReference>
<dbReference type="SMART" id="SM00079">
    <property type="entry name" value="PBPe"/>
    <property type="match status" value="1"/>
</dbReference>
<dbReference type="SUPFAM" id="SSF53822">
    <property type="entry name" value="Periplasmic binding protein-like I"/>
    <property type="match status" value="1"/>
</dbReference>
<dbReference type="SUPFAM" id="SSF53850">
    <property type="entry name" value="Periplasmic binding protein-like II"/>
    <property type="match status" value="1"/>
</dbReference>
<comment type="function">
    <text evidence="1 5 8 10 11 15 16 17 18">Ionotropic glutamate receptor that functions as a cation-permeable ligand-gated ion channel, gated by L-glutamate and the glutamatergic agonist kainic acid. L-glutamate acts as an excitatory neurotransmitter at many synapses in the central nervous system. Binding of the excitatory neurotransmitter L-glutamate induces a conformation change, leading to the opening of the cation channel, and thereby converts the chemical signal to an electrical impulse. The receptor then desensitizes rapidly and enters a transient inactive state, characterized by the presence of bound agonist (PubMed:1322826, PubMed:1648177, PubMed:17115050, PubMed:17486098, PubMed:25139762, PubMed:7678465, PubMed:7681676, PubMed:8163463). Modulates cell surface expression of NETO2. In association with GRIK3, involved in presynaptic facilitation of glutamate release at hippocampal mossy fiber synapses (By similarity).</text>
</comment>
<comment type="function">
    <text evidence="1">Independent of its ionotropic glutamate receptor activity, acts as a thermoreceptor conferring sensitivity to cold temperatures (By similarity). Functions in dorsal root ganglion neurons (By similarity).</text>
</comment>
<comment type="catalytic activity">
    <reaction evidence="16 17">
        <text>Ca(2+)(in) = Ca(2+)(out)</text>
        <dbReference type="Rhea" id="RHEA:29671"/>
        <dbReference type="ChEBI" id="CHEBI:29108"/>
    </reaction>
</comment>
<comment type="catalytic activity">
    <reaction evidence="2">
        <text>Na(+)(in) = Na(+)(out)</text>
        <dbReference type="Rhea" id="RHEA:34963"/>
        <dbReference type="ChEBI" id="CHEBI:29101"/>
    </reaction>
</comment>
<comment type="activity regulation">
    <text evidence="1">Cold receptor activity activated by temperatures between 10-19 degrees Celsius.</text>
</comment>
<comment type="subunit">
    <text evidence="1 4 6 8 9 10 12 13 14 15">Homotetramer and heterotetramer with GRIK5. Tetramers may be formed by the dimerization of dimers (PubMed:15677325, PubMed:17115050, PubMed:21791290, PubMed:22509486). Assembles into a kainate-gated homomeric channel that does not bind AMPA (PubMed:1648177). Can form functional heteromeric receptors with GRIK4 and GRIK5 (PubMed:25139762). Can form functional heteromeric receptors with GRIK3 (By similarity). Interacts with DLG4 (PubMed:11744724). Interacts with NETO2 (PubMed:19217376). Interacts (via C-terminus) with KLHL17 (via kelch repeats); the interaction targets GRIK2 for degradation via ubiquitin-proteasome pathway (PubMed:17062563).</text>
</comment>
<comment type="interaction">
    <interactant intactId="EBI-7809795">
        <id>P42260</id>
    </interactant>
    <interactant intactId="EBI-15612757">
        <id>P22756</id>
        <label>Grik1</label>
    </interactant>
    <organismsDiffer>false</organismsDiffer>
    <experiments>4</experiments>
</comment>
<comment type="interaction">
    <interactant intactId="EBI-7809795">
        <id>P42260</id>
    </interactant>
    <interactant intactId="EBI-7809795">
        <id>P42260</id>
        <label>Grik2</label>
    </interactant>
    <organismsDiffer>false</organismsDiffer>
    <experiments>10</experiments>
</comment>
<comment type="interaction">
    <interactant intactId="EBI-7809795">
        <id>P42260</id>
    </interactant>
    <interactant intactId="EBI-4279420">
        <id>Q66HA1</id>
        <label>Map3k11</label>
    </interactant>
    <organismsDiffer>false</organismsDiffer>
    <experiments>2</experiments>
</comment>
<comment type="interaction">
    <interactant intactId="EBI-7809795">
        <id>P42260</id>
    </interactant>
    <interactant intactId="EBI-7974636">
        <id>O70260</id>
        <label>Pias3</label>
    </interactant>
    <organismsDiffer>false</organismsDiffer>
    <experiments>3</experiments>
</comment>
<comment type="interaction">
    <interactant intactId="EBI-7809795">
        <id>P42260</id>
    </interactant>
    <interactant intactId="EBI-7253100">
        <id>Q5I0H3</id>
        <label>Sumo1</label>
    </interactant>
    <organismsDiffer>false</organismsDiffer>
    <experiments>4</experiments>
</comment>
<comment type="interaction">
    <interactant intactId="EBI-7809795">
        <id>P42260</id>
    </interactant>
    <interactant intactId="EBI-7974723">
        <id>P63281</id>
        <label>Ube2i</label>
    </interactant>
    <organismsDiffer>false</organismsDiffer>
    <experiments>3</experiments>
</comment>
<comment type="subcellular location">
    <subcellularLocation>
        <location evidence="11 14 18">Cell membrane</location>
        <topology evidence="3">Multi-pass membrane protein</topology>
    </subcellularLocation>
    <subcellularLocation>
        <location evidence="11">Postsynaptic cell membrane</location>
        <topology evidence="3">Multi-pass membrane protein</topology>
    </subcellularLocation>
</comment>
<comment type="tissue specificity">
    <text evidence="8">Highest expression is found in the olfactory lobe, piriform cortex, dentate gyrus, hippocampus, granular cell layer of the cerebellum, and in caudate-putamen.</text>
</comment>
<comment type="PTM">
    <text evidence="11">Sumoylation mediates kainate receptor-mediated endocytosis and regulates synaptic transmission. Sumoylation is enhanced by PIAS3 and desumoylated by SENP1.</text>
</comment>
<comment type="PTM">
    <text evidence="9">Ubiquitinated. Ubiquitination regulates the GRIK2 levels at the synapse by leading kainate receptor degradation through proteasome.</text>
</comment>
<comment type="PTM">
    <text evidence="2">Phosphorylated by PKC at Ser-868 upon agonist activation, this directly enhance sumoylation.</text>
</comment>
<comment type="RNA editing">
    <location>
        <position position="567" evidence="17"/>
    </location>
    <location>
        <position position="571" evidence="17"/>
    </location>
    <location>
        <position position="621" evidence="17"/>
    </location>
    <text evidence="16 17">Partially edited. The presence of Gln at position 621 (non-edited) determines channels with low calcium permeability, whereas an arginine residue (edited) determines a higher calcium permeability especially if the preceding sites are fully edited. This receptor is nearly completely edited in all gray matter structures (90% of the receptors).</text>
</comment>
<comment type="miscellaneous">
    <text evidence="8">The postsynaptic actions of Glu are mediated by a variety of receptors that are named according to their selective agonists. This receptor binds domoate &gt; kainate &gt; quisqualate &gt; glutamate. It does not bind AMPA without coexpression with GRIK5.</text>
</comment>
<comment type="similarity">
    <text evidence="19">Belongs to the glutamate-gated ion channel (TC 1.A.10.1) family. GRIK2 subfamily.</text>
</comment>
<evidence type="ECO:0000250" key="1">
    <source>
        <dbReference type="UniProtKB" id="P39087"/>
    </source>
</evidence>
<evidence type="ECO:0000250" key="2">
    <source>
        <dbReference type="UniProtKB" id="Q13002"/>
    </source>
</evidence>
<evidence type="ECO:0000255" key="3"/>
<evidence type="ECO:0000269" key="4">
    <source>
    </source>
</evidence>
<evidence type="ECO:0000269" key="5">
    <source>
    </source>
</evidence>
<evidence type="ECO:0000269" key="6">
    <source>
    </source>
</evidence>
<evidence type="ECO:0000269" key="7">
    <source>
    </source>
</evidence>
<evidence type="ECO:0000269" key="8">
    <source>
    </source>
</evidence>
<evidence type="ECO:0000269" key="9">
    <source>
    </source>
</evidence>
<evidence type="ECO:0000269" key="10">
    <source>
    </source>
</evidence>
<evidence type="ECO:0000269" key="11">
    <source>
    </source>
</evidence>
<evidence type="ECO:0000269" key="12">
    <source>
    </source>
</evidence>
<evidence type="ECO:0000269" key="13">
    <source>
    </source>
</evidence>
<evidence type="ECO:0000269" key="14">
    <source>
    </source>
</evidence>
<evidence type="ECO:0000269" key="15">
    <source>
    </source>
</evidence>
<evidence type="ECO:0000269" key="16">
    <source>
    </source>
</evidence>
<evidence type="ECO:0000269" key="17">
    <source>
    </source>
</evidence>
<evidence type="ECO:0000269" key="18">
    <source>
    </source>
</evidence>
<evidence type="ECO:0000305" key="19"/>
<evidence type="ECO:0000305" key="20">
    <source>
    </source>
</evidence>
<evidence type="ECO:0007744" key="21">
    <source>
        <dbReference type="PDB" id="1S50"/>
    </source>
</evidence>
<evidence type="ECO:0007744" key="22">
    <source>
        <dbReference type="PDB" id="1S7Y"/>
    </source>
</evidence>
<evidence type="ECO:0007744" key="23">
    <source>
        <dbReference type="PDB" id="2I0B"/>
    </source>
</evidence>
<evidence type="ECO:0007744" key="24">
    <source>
        <dbReference type="PDB" id="2I0C"/>
    </source>
</evidence>
<evidence type="ECO:0007744" key="25">
    <source>
        <dbReference type="PDB" id="3QLT"/>
    </source>
</evidence>
<evidence type="ECO:0007744" key="26">
    <source>
        <dbReference type="PDB" id="3QLU"/>
    </source>
</evidence>
<evidence type="ECO:0007744" key="27">
    <source>
        <dbReference type="PDB" id="3QLV"/>
    </source>
</evidence>
<evidence type="ECO:0007829" key="28">
    <source>
        <dbReference type="PDB" id="3G3K"/>
    </source>
</evidence>
<evidence type="ECO:0007829" key="29">
    <source>
        <dbReference type="PDB" id="3H6G"/>
    </source>
</evidence>
<evidence type="ECO:0007829" key="30">
    <source>
        <dbReference type="PDB" id="3H6H"/>
    </source>
</evidence>
<evidence type="ECO:0007829" key="31">
    <source>
        <dbReference type="PDB" id="3QLT"/>
    </source>
</evidence>
<evidence type="ECO:0007829" key="32">
    <source>
        <dbReference type="PDB" id="8F0O"/>
    </source>
</evidence>
<evidence type="ECO:0007829" key="33">
    <source>
        <dbReference type="PDB" id="8FWS"/>
    </source>
</evidence>
<evidence type="ECO:0007829" key="34">
    <source>
        <dbReference type="PDB" id="8FWU"/>
    </source>
</evidence>
<evidence type="ECO:0007829" key="35">
    <source>
        <dbReference type="PDB" id="9B35"/>
    </source>
</evidence>
<evidence type="ECO:0007829" key="36">
    <source>
        <dbReference type="PDB" id="9B38"/>
    </source>
</evidence>
<name>GRIK2_RAT</name>
<protein>
    <recommendedName>
        <fullName>Glutamate receptor ionotropic, kainate 2</fullName>
        <shortName>GluK2</shortName>
    </recommendedName>
    <alternativeName>
        <fullName>Glutamate receptor 6</fullName>
        <shortName>GluR-6</shortName>
        <shortName>GluR6</shortName>
    </alternativeName>
</protein>
<sequence length="908" mass="102470">MKIISPVLSNLVFSRSIKVLLCLLWIGYSQGTTHVLRFGGIFEYVESGPMGAEELAFRFAVNTINRNRTLLPNTTLTYDTQKINLYDSFEASKKACDQLSLGVAAIFGPSHSSSANAVQSICNALGVPHIQTRWKHQVSDNKDSFYVSLYPDFSSLSRAILDLVQFFKWKTVTVVYDDSTGLIRLQELIKAPSRYNLRLKIRQLPADTKDAKPLLKEMKRGKEFHVIFDCSHEMAAGILKQALAMGMMTEYYHYIFTTLDLFALDVEPYRYSGVNMTGFRILNTENTQVSSIIEKWSMERLQAPPKPDSGLLDGFMTTDAALMYDAVHVVSVAVQQFPQMTVSSLQCNRHKPWRFGTRFMSLIKEAHWEGLTGRITFNKTNGLRTDFDLDVISLKEEGLEKIGTWDPASGLNMTESQKGKPANITDSLSNRSLIVTTILEEPYVLFKKSDKPLYGNDRFEGYCIDLLRELSTILGFTYEIRLVEDGKYGAQDDVNGQWNGMVRELIDHKADLAVAPLAITYVREKVIDFSKPFMTLGISILYRKPNGTNPGVFSFLNPLSPDIWMYILLAYLGVSCVLFVIARFSPYEWYNPHPCNPDSDVVENNFTLLNSFWFGVGALMQQGSELMPKALSTRIVGGIWWFFTLIIISSYTANLAAFLTVERMESPIDSADDLAKQTKIEYGAVEDGATMTFFKKSKISTYDKMWAFMSSRRQSVLVKSNEEGIQRVLTSDYAFLMESTTIEFVTQRNCNLTQIGGLIDSKGYGVGTPMGSPYRDKITIAILQLQEEGKLHMMKEKWWRGNGCPEEESKEASALGVQNIGGIFIVLAAGLVLSVFVAVGEFLYKSKKNAQLEKRSFCSAMVEELRMSLKCQRRLKHKPQAPVIVKTEEVINMHTFNDRRLPGKETMA</sequence>
<keyword id="KW-0002">3D-structure</keyword>
<keyword id="KW-1003">Cell membrane</keyword>
<keyword id="KW-1015">Disulfide bond</keyword>
<keyword id="KW-0325">Glycoprotein</keyword>
<keyword id="KW-0407">Ion channel</keyword>
<keyword id="KW-0406">Ion transport</keyword>
<keyword id="KW-1017">Isopeptide bond</keyword>
<keyword id="KW-1071">Ligand-gated ion channel</keyword>
<keyword id="KW-0472">Membrane</keyword>
<keyword id="KW-0597">Phosphoprotein</keyword>
<keyword id="KW-0628">Postsynaptic cell membrane</keyword>
<keyword id="KW-0675">Receptor</keyword>
<keyword id="KW-1185">Reference proteome</keyword>
<keyword id="KW-0691">RNA editing</keyword>
<keyword id="KW-0732">Signal</keyword>
<keyword id="KW-0770">Synapse</keyword>
<keyword id="KW-0812">Transmembrane</keyword>
<keyword id="KW-1133">Transmembrane helix</keyword>
<keyword id="KW-0813">Transport</keyword>
<keyword id="KW-0832">Ubl conjugation</keyword>
<feature type="signal peptide" evidence="3">
    <location>
        <begin position="1"/>
        <end position="31"/>
    </location>
</feature>
<feature type="chain" id="PRO_0000011546" description="Glutamate receptor ionotropic, kainate 2">
    <location>
        <begin position="32"/>
        <end position="908"/>
    </location>
</feature>
<feature type="topological domain" description="Extracellular" evidence="20">
    <location>
        <begin position="32"/>
        <end position="561"/>
    </location>
</feature>
<feature type="transmembrane region" description="Helical" evidence="3">
    <location>
        <begin position="562"/>
        <end position="582"/>
    </location>
</feature>
<feature type="topological domain" description="Cytoplasmic" evidence="20">
    <location>
        <begin position="583"/>
        <end position="638"/>
    </location>
</feature>
<feature type="transmembrane region" description="Helical" evidence="3">
    <location>
        <begin position="639"/>
        <end position="659"/>
    </location>
</feature>
<feature type="topological domain" description="Extracellular" evidence="20">
    <location>
        <begin position="660"/>
        <end position="819"/>
    </location>
</feature>
<feature type="transmembrane region" description="Helical" evidence="3">
    <location>
        <begin position="820"/>
        <end position="840"/>
    </location>
</feature>
<feature type="topological domain" description="Cytoplasmic" evidence="20">
    <location>
        <begin position="841"/>
        <end position="908"/>
    </location>
</feature>
<feature type="binding site" evidence="7 10 21 22 23 24">
    <location>
        <position position="516"/>
    </location>
    <ligand>
        <name>L-glutamate</name>
        <dbReference type="ChEBI" id="CHEBI:29985"/>
    </ligand>
</feature>
<feature type="binding site" evidence="7 10 21 22 23 24">
    <location>
        <position position="518"/>
    </location>
    <ligand>
        <name>L-glutamate</name>
        <dbReference type="ChEBI" id="CHEBI:29985"/>
    </ligand>
</feature>
<feature type="binding site" evidence="7 10 21 22 23 24">
    <location>
        <position position="523"/>
    </location>
    <ligand>
        <name>L-glutamate</name>
        <dbReference type="ChEBI" id="CHEBI:29985"/>
    </ligand>
</feature>
<feature type="binding site" evidence="7 10 21 22 23 24">
    <location>
        <position position="689"/>
    </location>
    <ligand>
        <name>L-glutamate</name>
        <dbReference type="ChEBI" id="CHEBI:29985"/>
    </ligand>
</feature>
<feature type="binding site" evidence="7 10 21 22 23 24">
    <location>
        <position position="690"/>
    </location>
    <ligand>
        <name>L-glutamate</name>
        <dbReference type="ChEBI" id="CHEBI:29985"/>
    </ligand>
</feature>
<feature type="binding site" evidence="7 10 21 22 23 24">
    <location>
        <position position="738"/>
    </location>
    <ligand>
        <name>L-glutamate</name>
        <dbReference type="ChEBI" id="CHEBI:29985"/>
    </ligand>
</feature>
<feature type="modified residue" description="Phosphoserine; by PKC" evidence="2">
    <location>
        <position position="846"/>
    </location>
</feature>
<feature type="modified residue" description="Phosphoserine; by PKC" evidence="2">
    <location>
        <position position="868"/>
    </location>
</feature>
<feature type="glycosylation site" description="N-linked (GlcNAc...) asparagine" evidence="13">
    <location>
        <position position="67"/>
    </location>
</feature>
<feature type="glycosylation site" description="N-linked (GlcNAc...) asparagine" evidence="3">
    <location>
        <position position="73"/>
    </location>
</feature>
<feature type="glycosylation site" description="N-linked (GlcNAc...) asparagine" evidence="3">
    <location>
        <position position="275"/>
    </location>
</feature>
<feature type="glycosylation site" description="N-linked (GlcNAc...) asparagine" evidence="13">
    <location>
        <position position="378"/>
    </location>
</feature>
<feature type="glycosylation site" description="N-linked (GlcNAc...) asparagine" evidence="13">
    <location>
        <position position="412"/>
    </location>
</feature>
<feature type="glycosylation site" description="N-linked (GlcNAc...) asparagine" evidence="6">
    <location>
        <position position="423"/>
    </location>
</feature>
<feature type="glycosylation site" description="N-linked (GlcNAc...) asparagine" evidence="3">
    <location>
        <position position="430"/>
    </location>
</feature>
<feature type="glycosylation site" description="N-linked (GlcNAc...) asparagine" evidence="3">
    <location>
        <position position="546"/>
    </location>
</feature>
<feature type="glycosylation site" description="N-linked (GlcNAc...) asparagine" evidence="6 18">
    <location>
        <position position="751"/>
    </location>
</feature>
<feature type="disulfide bond" evidence="13 25 26 27">
    <location>
        <begin position="96"/>
        <end position="347"/>
    </location>
</feature>
<feature type="disulfide bond" evidence="2">
    <location>
        <begin position="750"/>
        <end position="804"/>
    </location>
</feature>
<feature type="cross-link" description="Glycyl lysine isopeptide (Lys-Gly) (interchain with G-Cter in SUMO1)" evidence="11">
    <location>
        <position position="886"/>
    </location>
</feature>
<feature type="sequence variant" description="In RNA edited version.">
    <original>I</original>
    <variation>C</variation>
    <location>
        <position position="567"/>
    </location>
</feature>
<feature type="sequence variant" description="In RNA edited version.">
    <original>Y</original>
    <variation>C</variation>
    <location>
        <position position="571"/>
    </location>
</feature>
<feature type="sequence variant" description="In RNA edited version.">
    <original>Q</original>
    <variation>R</variation>
    <location>
        <position position="621"/>
    </location>
</feature>
<feature type="mutagenesis site" description="Loss of glycosylation." evidence="18">
    <original>N</original>
    <variation>Q</variation>
    <location>
        <position position="751"/>
    </location>
</feature>
<feature type="mutagenesis site" description="Abolishes interaction with KLHL17. Abolishes actinfilin-mediated degradation." evidence="9">
    <original>V</original>
    <variation>A</variation>
    <location>
        <position position="883"/>
    </location>
</feature>
<feature type="mutagenesis site" description="Abolishes interaction with KLHL17. Abolishes actinfilin-mediated degradation." evidence="9">
    <original>I</original>
    <variation>A</variation>
    <location>
        <position position="884"/>
    </location>
</feature>
<feature type="mutagenesis site" description="Abolishes sumoylation. Loss of kainate-mediated endocytosis." evidence="11">
    <original>K</original>
    <variation>R</variation>
    <location>
        <position position="886"/>
    </location>
</feature>
<feature type="strand" evidence="29">
    <location>
        <begin position="34"/>
        <end position="47"/>
    </location>
</feature>
<feature type="helix" evidence="29">
    <location>
        <begin position="52"/>
        <end position="66"/>
    </location>
</feature>
<feature type="strand" evidence="29">
    <location>
        <begin position="68"/>
        <end position="84"/>
    </location>
</feature>
<feature type="helix" evidence="29">
    <location>
        <begin position="88"/>
        <end position="101"/>
    </location>
</feature>
<feature type="helix" evidence="29">
    <location>
        <begin position="112"/>
        <end position="124"/>
    </location>
</feature>
<feature type="strand" evidence="29">
    <location>
        <begin position="129"/>
        <end position="131"/>
    </location>
</feature>
<feature type="strand" evidence="29">
    <location>
        <begin position="145"/>
        <end position="151"/>
    </location>
</feature>
<feature type="helix" evidence="29">
    <location>
        <begin position="153"/>
        <end position="166"/>
    </location>
</feature>
<feature type="strand" evidence="29">
    <location>
        <begin position="170"/>
        <end position="178"/>
    </location>
</feature>
<feature type="helix" evidence="29">
    <location>
        <begin position="180"/>
        <end position="184"/>
    </location>
</feature>
<feature type="helix" evidence="29">
    <location>
        <begin position="186"/>
        <end position="189"/>
    </location>
</feature>
<feature type="helix" evidence="29">
    <location>
        <begin position="191"/>
        <end position="193"/>
    </location>
</feature>
<feature type="strand" evidence="29">
    <location>
        <begin position="198"/>
        <end position="203"/>
    </location>
</feature>
<feature type="helix" evidence="29">
    <location>
        <begin position="208"/>
        <end position="211"/>
    </location>
</feature>
<feature type="helix" evidence="29">
    <location>
        <begin position="212"/>
        <end position="220"/>
    </location>
</feature>
<feature type="strand" evidence="29">
    <location>
        <begin position="225"/>
        <end position="230"/>
    </location>
</feature>
<feature type="helix" evidence="29">
    <location>
        <begin position="232"/>
        <end position="244"/>
    </location>
</feature>
<feature type="strand" evidence="31">
    <location>
        <begin position="249"/>
        <end position="251"/>
    </location>
</feature>
<feature type="strand" evidence="29">
    <location>
        <begin position="253"/>
        <end position="256"/>
    </location>
</feature>
<feature type="helix" evidence="29">
    <location>
        <begin position="261"/>
        <end position="263"/>
    </location>
</feature>
<feature type="turn" evidence="29">
    <location>
        <begin position="267"/>
        <end position="271"/>
    </location>
</feature>
<feature type="strand" evidence="29">
    <location>
        <begin position="275"/>
        <end position="280"/>
    </location>
</feature>
<feature type="helix" evidence="29">
    <location>
        <begin position="287"/>
        <end position="298"/>
    </location>
</feature>
<feature type="strand" evidence="31">
    <location>
        <begin position="309"/>
        <end position="311"/>
    </location>
</feature>
<feature type="helix" evidence="29">
    <location>
        <begin position="318"/>
        <end position="335"/>
    </location>
</feature>
<feature type="strand" evidence="30">
    <location>
        <begin position="347"/>
        <end position="349"/>
    </location>
</feature>
<feature type="helix" evidence="29">
    <location>
        <begin position="356"/>
        <end position="365"/>
    </location>
</feature>
<feature type="strand" evidence="29">
    <location>
        <begin position="367"/>
        <end position="370"/>
    </location>
</feature>
<feature type="strand" evidence="29">
    <location>
        <begin position="373"/>
        <end position="376"/>
    </location>
</feature>
<feature type="turn" evidence="29">
    <location>
        <begin position="379"/>
        <end position="381"/>
    </location>
</feature>
<feature type="strand" evidence="29">
    <location>
        <begin position="382"/>
        <end position="384"/>
    </location>
</feature>
<feature type="strand" evidence="29">
    <location>
        <begin position="389"/>
        <end position="395"/>
    </location>
</feature>
<feature type="strand" evidence="29">
    <location>
        <begin position="398"/>
        <end position="406"/>
    </location>
</feature>
<feature type="turn" evidence="29">
    <location>
        <begin position="407"/>
        <end position="409"/>
    </location>
</feature>
<feature type="strand" evidence="30">
    <location>
        <begin position="410"/>
        <end position="413"/>
    </location>
</feature>
<feature type="helix" evidence="32">
    <location>
        <begin position="424"/>
        <end position="426"/>
    </location>
</feature>
<feature type="turn" evidence="36">
    <location>
        <begin position="427"/>
        <end position="430"/>
    </location>
</feature>
<feature type="strand" evidence="28">
    <location>
        <begin position="433"/>
        <end position="437"/>
    </location>
</feature>
<feature type="turn" evidence="28">
    <location>
        <begin position="441"/>
        <end position="443"/>
    </location>
</feature>
<feature type="strand" evidence="28">
    <location>
        <begin position="444"/>
        <end position="446"/>
    </location>
</feature>
<feature type="helix" evidence="28">
    <location>
        <begin position="455"/>
        <end position="458"/>
    </location>
</feature>
<feature type="strand" evidence="28">
    <location>
        <begin position="459"/>
        <end position="461"/>
    </location>
</feature>
<feature type="helix" evidence="28">
    <location>
        <begin position="462"/>
        <end position="474"/>
    </location>
</feature>
<feature type="strand" evidence="28">
    <location>
        <begin position="478"/>
        <end position="482"/>
    </location>
</feature>
<feature type="turn" evidence="28">
    <location>
        <begin position="493"/>
        <end position="495"/>
    </location>
</feature>
<feature type="helix" evidence="28">
    <location>
        <begin position="500"/>
        <end position="506"/>
    </location>
</feature>
<feature type="strand" evidence="28">
    <location>
        <begin position="511"/>
        <end position="513"/>
    </location>
</feature>
<feature type="helix" evidence="28">
    <location>
        <begin position="521"/>
        <end position="524"/>
    </location>
</feature>
<feature type="strand" evidence="28">
    <location>
        <begin position="527"/>
        <end position="529"/>
    </location>
</feature>
<feature type="strand" evidence="28">
    <location>
        <begin position="533"/>
        <end position="536"/>
    </location>
</feature>
<feature type="strand" evidence="28">
    <location>
        <begin position="538"/>
        <end position="544"/>
    </location>
</feature>
<feature type="strand" evidence="32">
    <location>
        <begin position="551"/>
        <end position="553"/>
    </location>
</feature>
<feature type="helix" evidence="34">
    <location>
        <begin position="554"/>
        <end position="556"/>
    </location>
</feature>
<feature type="helix" evidence="32">
    <location>
        <begin position="561"/>
        <end position="580"/>
    </location>
</feature>
<feature type="turn" evidence="33">
    <location>
        <begin position="586"/>
        <end position="588"/>
    </location>
</feature>
<feature type="strand" evidence="33">
    <location>
        <begin position="594"/>
        <end position="596"/>
    </location>
</feature>
<feature type="helix" evidence="34">
    <location>
        <begin position="609"/>
        <end position="619"/>
    </location>
</feature>
<feature type="helix" evidence="32">
    <location>
        <begin position="632"/>
        <end position="663"/>
    </location>
</feature>
<feature type="helix" evidence="28">
    <location>
        <begin position="671"/>
        <end position="675"/>
    </location>
</feature>
<feature type="strand" evidence="28">
    <location>
        <begin position="678"/>
        <end position="685"/>
    </location>
</feature>
<feature type="helix" evidence="28">
    <location>
        <begin position="689"/>
        <end position="696"/>
    </location>
</feature>
<feature type="helix" evidence="28">
    <location>
        <begin position="700"/>
        <end position="711"/>
    </location>
</feature>
<feature type="helix" evidence="28">
    <location>
        <begin position="713"/>
        <end position="716"/>
    </location>
</feature>
<feature type="strand" evidence="28">
    <location>
        <begin position="717"/>
        <end position="720"/>
    </location>
</feature>
<feature type="helix" evidence="28">
    <location>
        <begin position="721"/>
        <end position="730"/>
    </location>
</feature>
<feature type="strand" evidence="28">
    <location>
        <begin position="731"/>
        <end position="738"/>
    </location>
</feature>
<feature type="helix" evidence="28">
    <location>
        <begin position="739"/>
        <end position="748"/>
    </location>
</feature>
<feature type="strand" evidence="28">
    <location>
        <begin position="752"/>
        <end position="757"/>
    </location>
</feature>
<feature type="strand" evidence="28">
    <location>
        <begin position="762"/>
        <end position="764"/>
    </location>
</feature>
<feature type="strand" evidence="28">
    <location>
        <begin position="767"/>
        <end position="769"/>
    </location>
</feature>
<feature type="helix" evidence="28">
    <location>
        <begin position="774"/>
        <end position="787"/>
    </location>
</feature>
<feature type="helix" evidence="28">
    <location>
        <begin position="790"/>
        <end position="799"/>
    </location>
</feature>
<feature type="strand" evidence="33">
    <location>
        <begin position="813"/>
        <end position="815"/>
    </location>
</feature>
<feature type="turn" evidence="34">
    <location>
        <begin position="817"/>
        <end position="819"/>
    </location>
</feature>
<feature type="helix" evidence="32">
    <location>
        <begin position="823"/>
        <end position="838"/>
    </location>
</feature>
<feature type="helix" evidence="35">
    <location>
        <begin position="849"/>
        <end position="851"/>
    </location>
</feature>
<feature type="helix" evidence="35">
    <location>
        <begin position="856"/>
        <end position="867"/>
    </location>
</feature>
<proteinExistence type="evidence at protein level"/>